<protein>
    <recommendedName>
        <fullName evidence="1">DNA replication and repair protein RecF</fullName>
    </recommendedName>
</protein>
<gene>
    <name evidence="1" type="primary">recF</name>
    <name type="ordered locus">SYNPCC7002_A2277</name>
</gene>
<sequence length="388" mass="44214">MYLQTLHLRNFRNYQHQHVDFSAQKTILIGNNAQGKSNLLEAVELLASLKTHRTSRDADLVKQGEATARIQAQIQRGYGTVDFDLLLRNQGGRTLKLNGEILRRQLDGLGTLNAVEFSCLDLDLVRGGPDCRRQWIDNLLIQLEPVYARILQEYQQVLKQRNALLRTAKKLHRNQAAIPTDLTQQLTLWDLQLAATGSRVTRRRSRGLLRLMPLAQAWHRDISSQTETLEITYCPNIPWQQDDPHHVQQACLDKIEQRRQAEQHQGSSMVGPHRDEIEFSINGTPARFYGSQGQQRTLVLALKLAELQLIETIIGEPPLLLLDDVLAELDPSRQNQLLDTIQTRFQTLITTTHLNSFGADWLKHSQILTVNQGTLQPYARPLSETYGP</sequence>
<evidence type="ECO:0000255" key="1">
    <source>
        <dbReference type="HAMAP-Rule" id="MF_00365"/>
    </source>
</evidence>
<accession>B1XJ90</accession>
<reference key="1">
    <citation type="submission" date="2008-02" db="EMBL/GenBank/DDBJ databases">
        <title>Complete sequence of Synechococcus sp. PCC 7002.</title>
        <authorList>
            <person name="Li T."/>
            <person name="Zhao J."/>
            <person name="Zhao C."/>
            <person name="Liu Z."/>
            <person name="Zhao F."/>
            <person name="Marquardt J."/>
            <person name="Nomura C.T."/>
            <person name="Persson S."/>
            <person name="Detter J.C."/>
            <person name="Richardson P.M."/>
            <person name="Lanz C."/>
            <person name="Schuster S.C."/>
            <person name="Wang J."/>
            <person name="Li S."/>
            <person name="Huang X."/>
            <person name="Cai T."/>
            <person name="Yu Z."/>
            <person name="Luo J."/>
            <person name="Zhao J."/>
            <person name="Bryant D.A."/>
        </authorList>
    </citation>
    <scope>NUCLEOTIDE SEQUENCE [LARGE SCALE GENOMIC DNA]</scope>
    <source>
        <strain>ATCC 27264 / PCC 7002 / PR-6</strain>
    </source>
</reference>
<organism>
    <name type="scientific">Picosynechococcus sp. (strain ATCC 27264 / PCC 7002 / PR-6)</name>
    <name type="common">Agmenellum quadruplicatum</name>
    <dbReference type="NCBI Taxonomy" id="32049"/>
    <lineage>
        <taxon>Bacteria</taxon>
        <taxon>Bacillati</taxon>
        <taxon>Cyanobacteriota</taxon>
        <taxon>Cyanophyceae</taxon>
        <taxon>Oscillatoriophycideae</taxon>
        <taxon>Chroococcales</taxon>
        <taxon>Geminocystaceae</taxon>
        <taxon>Picosynechococcus</taxon>
    </lineage>
</organism>
<keyword id="KW-0067">ATP-binding</keyword>
<keyword id="KW-0963">Cytoplasm</keyword>
<keyword id="KW-0227">DNA damage</keyword>
<keyword id="KW-0234">DNA repair</keyword>
<keyword id="KW-0235">DNA replication</keyword>
<keyword id="KW-0238">DNA-binding</keyword>
<keyword id="KW-0547">Nucleotide-binding</keyword>
<keyword id="KW-1185">Reference proteome</keyword>
<keyword id="KW-0742">SOS response</keyword>
<comment type="function">
    <text evidence="1">The RecF protein is involved in DNA metabolism; it is required for DNA replication and normal SOS inducibility. RecF binds preferentially to single-stranded, linear DNA. It also seems to bind ATP.</text>
</comment>
<comment type="subcellular location">
    <subcellularLocation>
        <location evidence="1">Cytoplasm</location>
    </subcellularLocation>
</comment>
<comment type="similarity">
    <text evidence="1">Belongs to the RecF family.</text>
</comment>
<name>RECF_PICP2</name>
<feature type="chain" id="PRO_1000121165" description="DNA replication and repair protein RecF">
    <location>
        <begin position="1"/>
        <end position="388"/>
    </location>
</feature>
<feature type="binding site" evidence="1">
    <location>
        <begin position="30"/>
        <end position="37"/>
    </location>
    <ligand>
        <name>ATP</name>
        <dbReference type="ChEBI" id="CHEBI:30616"/>
    </ligand>
</feature>
<proteinExistence type="inferred from homology"/>
<dbReference type="EMBL" id="CP000951">
    <property type="protein sequence ID" value="ACB00256.1"/>
    <property type="molecule type" value="Genomic_DNA"/>
</dbReference>
<dbReference type="RefSeq" id="WP_012307874.1">
    <property type="nucleotide sequence ID" value="NZ_JAHHPU010000006.1"/>
</dbReference>
<dbReference type="SMR" id="B1XJ90"/>
<dbReference type="STRING" id="32049.SYNPCC7002_A2277"/>
<dbReference type="KEGG" id="syp:SYNPCC7002_A2277"/>
<dbReference type="eggNOG" id="COG1195">
    <property type="taxonomic scope" value="Bacteria"/>
</dbReference>
<dbReference type="HOGENOM" id="CLU_040267_0_1_3"/>
<dbReference type="Proteomes" id="UP000001688">
    <property type="component" value="Chromosome"/>
</dbReference>
<dbReference type="GO" id="GO:0005737">
    <property type="term" value="C:cytoplasm"/>
    <property type="evidence" value="ECO:0007669"/>
    <property type="project" value="UniProtKB-SubCell"/>
</dbReference>
<dbReference type="GO" id="GO:0005524">
    <property type="term" value="F:ATP binding"/>
    <property type="evidence" value="ECO:0007669"/>
    <property type="project" value="UniProtKB-UniRule"/>
</dbReference>
<dbReference type="GO" id="GO:0003697">
    <property type="term" value="F:single-stranded DNA binding"/>
    <property type="evidence" value="ECO:0007669"/>
    <property type="project" value="UniProtKB-UniRule"/>
</dbReference>
<dbReference type="GO" id="GO:0006260">
    <property type="term" value="P:DNA replication"/>
    <property type="evidence" value="ECO:0007669"/>
    <property type="project" value="UniProtKB-UniRule"/>
</dbReference>
<dbReference type="GO" id="GO:0000731">
    <property type="term" value="P:DNA synthesis involved in DNA repair"/>
    <property type="evidence" value="ECO:0007669"/>
    <property type="project" value="TreeGrafter"/>
</dbReference>
<dbReference type="GO" id="GO:0006302">
    <property type="term" value="P:double-strand break repair"/>
    <property type="evidence" value="ECO:0007669"/>
    <property type="project" value="TreeGrafter"/>
</dbReference>
<dbReference type="GO" id="GO:0009432">
    <property type="term" value="P:SOS response"/>
    <property type="evidence" value="ECO:0007669"/>
    <property type="project" value="UniProtKB-UniRule"/>
</dbReference>
<dbReference type="CDD" id="cd03242">
    <property type="entry name" value="ABC_RecF"/>
    <property type="match status" value="1"/>
</dbReference>
<dbReference type="Gene3D" id="3.40.50.300">
    <property type="entry name" value="P-loop containing nucleotide triphosphate hydrolases"/>
    <property type="match status" value="1"/>
</dbReference>
<dbReference type="Gene3D" id="1.20.1050.90">
    <property type="entry name" value="RecF/RecN/SMC, N-terminal domain"/>
    <property type="match status" value="1"/>
</dbReference>
<dbReference type="HAMAP" id="MF_00365">
    <property type="entry name" value="RecF"/>
    <property type="match status" value="1"/>
</dbReference>
<dbReference type="InterPro" id="IPR001238">
    <property type="entry name" value="DNA-binding_RecF"/>
</dbReference>
<dbReference type="InterPro" id="IPR018078">
    <property type="entry name" value="DNA-binding_RecF_CS"/>
</dbReference>
<dbReference type="InterPro" id="IPR027417">
    <property type="entry name" value="P-loop_NTPase"/>
</dbReference>
<dbReference type="InterPro" id="IPR003395">
    <property type="entry name" value="RecF/RecN/SMC_N"/>
</dbReference>
<dbReference type="InterPro" id="IPR042174">
    <property type="entry name" value="RecF_2"/>
</dbReference>
<dbReference type="NCBIfam" id="TIGR00611">
    <property type="entry name" value="recf"/>
    <property type="match status" value="1"/>
</dbReference>
<dbReference type="PANTHER" id="PTHR32182">
    <property type="entry name" value="DNA REPLICATION AND REPAIR PROTEIN RECF"/>
    <property type="match status" value="1"/>
</dbReference>
<dbReference type="PANTHER" id="PTHR32182:SF0">
    <property type="entry name" value="DNA REPLICATION AND REPAIR PROTEIN RECF"/>
    <property type="match status" value="1"/>
</dbReference>
<dbReference type="Pfam" id="PF02463">
    <property type="entry name" value="SMC_N"/>
    <property type="match status" value="1"/>
</dbReference>
<dbReference type="SUPFAM" id="SSF52540">
    <property type="entry name" value="P-loop containing nucleoside triphosphate hydrolases"/>
    <property type="match status" value="1"/>
</dbReference>
<dbReference type="PROSITE" id="PS00617">
    <property type="entry name" value="RECF_1"/>
    <property type="match status" value="1"/>
</dbReference>
<dbReference type="PROSITE" id="PS00618">
    <property type="entry name" value="RECF_2"/>
    <property type="match status" value="1"/>
</dbReference>